<proteinExistence type="inferred from homology"/>
<gene>
    <name type="ordered locus">IL1825</name>
</gene>
<feature type="chain" id="PRO_0000375315" description="YcgL domain-containing protein IL1825">
    <location>
        <begin position="1"/>
        <end position="86"/>
    </location>
</feature>
<feature type="domain" description="YcgL" evidence="1">
    <location>
        <begin position="1"/>
        <end position="85"/>
    </location>
</feature>
<reference key="1">
    <citation type="journal article" date="2004" name="Proc. Natl. Acad. Sci. U.S.A.">
        <title>Genome sequence of the deep-sea gamma-proteobacterium Idiomarina loihiensis reveals amino acid fermentation as a source of carbon and energy.</title>
        <authorList>
            <person name="Hou S."/>
            <person name="Saw J.H."/>
            <person name="Lee K.S."/>
            <person name="Freitas T.A."/>
            <person name="Belisle C."/>
            <person name="Kawarabayasi Y."/>
            <person name="Donachie S.P."/>
            <person name="Pikina A."/>
            <person name="Galperin M.Y."/>
            <person name="Koonin E.V."/>
            <person name="Makarova K.S."/>
            <person name="Omelchenko M.V."/>
            <person name="Sorokin A."/>
            <person name="Wolf Y.I."/>
            <person name="Li Q.X."/>
            <person name="Keum Y.S."/>
            <person name="Campbell S."/>
            <person name="Denery J."/>
            <person name="Aizawa S."/>
            <person name="Shibata S."/>
            <person name="Malahoff A."/>
            <person name="Alam M."/>
        </authorList>
    </citation>
    <scope>NUCLEOTIDE SEQUENCE [LARGE SCALE GENOMIC DNA]</scope>
    <source>
        <strain>ATCC BAA-735 / DSM 15497 / L2-TR</strain>
    </source>
</reference>
<dbReference type="EMBL" id="AE017340">
    <property type="protein sequence ID" value="AAV82657.1"/>
    <property type="molecule type" value="Genomic_DNA"/>
</dbReference>
<dbReference type="RefSeq" id="WP_011235057.1">
    <property type="nucleotide sequence ID" value="NC_006512.1"/>
</dbReference>
<dbReference type="SMR" id="Q5QWP6"/>
<dbReference type="STRING" id="283942.IL1825"/>
<dbReference type="GeneID" id="41337009"/>
<dbReference type="KEGG" id="ilo:IL1825"/>
<dbReference type="eggNOG" id="COG3100">
    <property type="taxonomic scope" value="Bacteria"/>
</dbReference>
<dbReference type="HOGENOM" id="CLU_155118_1_0_6"/>
<dbReference type="OrthoDB" id="7062382at2"/>
<dbReference type="Proteomes" id="UP000001171">
    <property type="component" value="Chromosome"/>
</dbReference>
<dbReference type="Gene3D" id="3.10.510.20">
    <property type="entry name" value="YcgL domain"/>
    <property type="match status" value="1"/>
</dbReference>
<dbReference type="HAMAP" id="MF_01866">
    <property type="entry name" value="UPF0745"/>
    <property type="match status" value="1"/>
</dbReference>
<dbReference type="InterPro" id="IPR038068">
    <property type="entry name" value="YcgL-like_sf"/>
</dbReference>
<dbReference type="InterPro" id="IPR027354">
    <property type="entry name" value="YcgL_dom"/>
</dbReference>
<dbReference type="PANTHER" id="PTHR38109">
    <property type="entry name" value="PROTEIN YCGL"/>
    <property type="match status" value="1"/>
</dbReference>
<dbReference type="PANTHER" id="PTHR38109:SF1">
    <property type="entry name" value="PROTEIN YCGL"/>
    <property type="match status" value="1"/>
</dbReference>
<dbReference type="Pfam" id="PF05166">
    <property type="entry name" value="YcgL"/>
    <property type="match status" value="1"/>
</dbReference>
<dbReference type="SUPFAM" id="SSF160191">
    <property type="entry name" value="YcgL-like"/>
    <property type="match status" value="1"/>
</dbReference>
<dbReference type="PROSITE" id="PS51648">
    <property type="entry name" value="YCGL"/>
    <property type="match status" value="1"/>
</dbReference>
<keyword id="KW-1185">Reference proteome</keyword>
<name>Y1825_IDILO</name>
<accession>Q5QWP6</accession>
<organism>
    <name type="scientific">Idiomarina loihiensis (strain ATCC BAA-735 / DSM 15497 / L2-TR)</name>
    <dbReference type="NCBI Taxonomy" id="283942"/>
    <lineage>
        <taxon>Bacteria</taxon>
        <taxon>Pseudomonadati</taxon>
        <taxon>Pseudomonadota</taxon>
        <taxon>Gammaproteobacteria</taxon>
        <taxon>Alteromonadales</taxon>
        <taxon>Idiomarinaceae</taxon>
        <taxon>Idiomarina</taxon>
    </lineage>
</organism>
<sequence length="86" mass="9982">MLCDVYRSSKKADTYLYLPHGNEFTDVPDVLLGQFGRAEKVLTINLANREQLARLTVEKLQQHLHNDGFYLQLPPKREELQVNVNK</sequence>
<evidence type="ECO:0000255" key="1">
    <source>
        <dbReference type="HAMAP-Rule" id="MF_01866"/>
    </source>
</evidence>
<protein>
    <recommendedName>
        <fullName evidence="1">YcgL domain-containing protein IL1825</fullName>
    </recommendedName>
</protein>